<organism evidence="9">
    <name type="scientific">Caenorhabditis elegans</name>
    <dbReference type="NCBI Taxonomy" id="6239"/>
    <lineage>
        <taxon>Eukaryota</taxon>
        <taxon>Metazoa</taxon>
        <taxon>Ecdysozoa</taxon>
        <taxon>Nematoda</taxon>
        <taxon>Chromadorea</taxon>
        <taxon>Rhabditida</taxon>
        <taxon>Rhabditina</taxon>
        <taxon>Rhabditomorpha</taxon>
        <taxon>Rhabditoidea</taxon>
        <taxon>Rhabditidae</taxon>
        <taxon>Peloderinae</taxon>
        <taxon>Caenorhabditis</taxon>
    </lineage>
</organism>
<sequence>MSHPGWIMVSFLTELLSQSSKGIAQSLDNCANDTEIINALLKDSYNKHYIPSHPTHVRVDMWVQEVTSVSELTQDFEIDLYINEFWEDPALVYEDMNPCKRNISFDDKVLQRLWLPNTCFINSKSAAIHESPFKNVFLMVFSNGTLWTNYRMKLTGPCDMKLKRFPFDKQKCYLTFESFNYNTGEVRMQWNQPYPVILLKRIELPDFKLVNFSVIAVEQMYPAGWWDELTVAFVFERRYGWYVLQGYIPTMVTIVISWISFYLGPRAIPARTMLGVNSLLAMTFQFGNIIRNLPRVSYVKAIDVWMLSGMLFIFLSLLELAVVGFMSRNEGLPPKVKKRKRQEDDDEGFSWKSMQTSPHLELRQFWVDKRVNSLRNDSAVPPVEDYAPMELEQPYQNITKRREKRKWMSGLRKKWRAMRELRPETVDFYSAIFFPTAYMLFNISYWSFYLTSLSEYFDEDVNIDQP</sequence>
<gene>
    <name evidence="10" type="primary">acc-1</name>
    <name evidence="10" type="ORF">F58G6.4</name>
</gene>
<evidence type="ECO:0000250" key="1">
    <source>
        <dbReference type="UniProtKB" id="P02712"/>
    </source>
</evidence>
<evidence type="ECO:0000255" key="2"/>
<evidence type="ECO:0000255" key="3">
    <source>
        <dbReference type="PROSITE-ProRule" id="PRU00498"/>
    </source>
</evidence>
<evidence type="ECO:0000256" key="4">
    <source>
        <dbReference type="SAM" id="MobiDB-lite"/>
    </source>
</evidence>
<evidence type="ECO:0000269" key="5">
    <source>
    </source>
</evidence>
<evidence type="ECO:0000269" key="6">
    <source>
    </source>
</evidence>
<evidence type="ECO:0000269" key="7">
    <source>
    </source>
</evidence>
<evidence type="ECO:0000305" key="8"/>
<evidence type="ECO:0000312" key="9">
    <source>
        <dbReference type="Proteomes" id="UP000001940"/>
    </source>
</evidence>
<evidence type="ECO:0000312" key="10">
    <source>
        <dbReference type="WormBase" id="F58G6.4a"/>
    </source>
</evidence>
<proteinExistence type="evidence at protein level"/>
<feature type="signal peptide" evidence="2">
    <location>
        <begin position="1"/>
        <end position="24"/>
    </location>
</feature>
<feature type="chain" id="PRO_5004199465" description="Acetylcholine-gated chloride channel subunit acc-1" evidence="8">
    <location>
        <begin position="25"/>
        <end position="466"/>
    </location>
</feature>
<feature type="topological domain" description="Extracellular" evidence="8">
    <location>
        <begin position="25"/>
        <end position="242"/>
    </location>
</feature>
<feature type="transmembrane region" description="Helical" evidence="2">
    <location>
        <begin position="243"/>
        <end position="263"/>
    </location>
</feature>
<feature type="topological domain" description="Cytoplasmic" evidence="8">
    <location>
        <begin position="264"/>
        <end position="272"/>
    </location>
</feature>
<feature type="transmembrane region" description="Helical" evidence="2">
    <location>
        <begin position="273"/>
        <end position="290"/>
    </location>
</feature>
<feature type="topological domain" description="Extracellular" evidence="8">
    <location>
        <begin position="291"/>
        <end position="304"/>
    </location>
</feature>
<feature type="transmembrane region" description="Helical" evidence="2">
    <location>
        <begin position="305"/>
        <end position="325"/>
    </location>
</feature>
<feature type="topological domain" description="Cytoplasmic" evidence="8">
    <location>
        <begin position="326"/>
        <end position="427"/>
    </location>
</feature>
<feature type="transmembrane region" description="Helical" evidence="2">
    <location>
        <begin position="428"/>
        <end position="448"/>
    </location>
</feature>
<feature type="topological domain" description="Extracellular" evidence="8">
    <location>
        <begin position="449"/>
        <end position="466"/>
    </location>
</feature>
<feature type="region of interest" description="Disordered" evidence="4">
    <location>
        <begin position="333"/>
        <end position="352"/>
    </location>
</feature>
<feature type="glycosylation site" description="N-linked (GlcNAc...) asparagine" evidence="3">
    <location>
        <position position="32"/>
    </location>
</feature>
<feature type="glycosylation site" description="N-linked (GlcNAc...) asparagine" evidence="3">
    <location>
        <position position="102"/>
    </location>
</feature>
<feature type="glycosylation site" description="N-linked (GlcNAc...) asparagine" evidence="3">
    <location>
        <position position="143"/>
    </location>
</feature>
<feature type="glycosylation site" description="N-linked (GlcNAc...) asparagine" evidence="3">
    <location>
        <position position="211"/>
    </location>
</feature>
<feature type="disulfide bond" evidence="1">
    <location>
        <begin position="158"/>
        <end position="172"/>
    </location>
</feature>
<comment type="function">
    <text evidence="5">Acetylcholine-gated chloride channel subunit. Forms functional homopentameric (in vitro) and functional heteropentameric ion channels with acc-3 and acc-4 ion channel subunits. Currents in channels are triggered in response to acetylcholine, but not in response to GABA, glutamate, glycine, histamine or dopamine.</text>
</comment>
<comment type="subunit">
    <text evidence="5">Homopentamer (in vitro). Forms heteropentamers composed of acc-1 and acc-4 or acc-1 and acc-3. Both homopentamers and heteropentamers form functional ion channels.</text>
</comment>
<comment type="subcellular location">
    <subcellularLocation>
        <location evidence="5">Cell membrane</location>
        <topology evidence="2">Multi-pass membrane protein</topology>
    </subcellularLocation>
</comment>
<comment type="tissue specificity">
    <text evidence="6">Expressed in a subset of cholinergic motor neurons including cholinergic motor neurons in the ventral cord, the retrovesicular ganglion and in head neurons such as the SMD, RMD motor neurons, the AVA and AVE command interneurons and the SAA neurons. Also expressed in a small number of glutamatergic neurons including the pharyngeal neurons MI and M3, the PLM neurons and a pair of neurons in the lateral ganglion.</text>
</comment>
<comment type="disruption phenotype">
    <text evidence="7">Grossly normal movement.</text>
</comment>
<comment type="similarity">
    <text evidence="8">Belongs to the ligand-gated ion channel (TC 1.A.9) family.</text>
</comment>
<name>ACC1_CAEEL</name>
<reference evidence="8" key="1">
    <citation type="journal article" date="2005" name="J. Biol. Chem.">
        <title>A family of acetylcholine-gated chloride channel subunits in Caenorhabditis elegans.</title>
        <authorList>
            <person name="Putrenko I."/>
            <person name="Zakikhani M."/>
            <person name="Dent J.A."/>
        </authorList>
    </citation>
    <scope>NUCLEOTIDE SEQUENCE [MRNA]</scope>
    <scope>FUNCTION</scope>
    <scope>SUBUNIT</scope>
    <scope>SUBCELLULAR LOCATION</scope>
</reference>
<reference evidence="9" key="2">
    <citation type="journal article" date="1998" name="Science">
        <title>Genome sequence of the nematode C. elegans: a platform for investigating biology.</title>
        <authorList>
            <consortium name="The C. elegans sequencing consortium"/>
        </authorList>
    </citation>
    <scope>NUCLEOTIDE SEQUENCE [LARGE SCALE GENOMIC DNA]</scope>
    <source>
        <strain evidence="9">Bristol N2</strain>
    </source>
</reference>
<reference evidence="8" key="3">
    <citation type="journal article" date="2015" name="Elife">
        <title>A cellular and regulatory map of the cholinergic nervous system of C. elegans.</title>
        <authorList>
            <person name="Pereira L."/>
            <person name="Kratsios P."/>
            <person name="Serrano-Saiz E."/>
            <person name="Sheftel H."/>
            <person name="Mayo A.E."/>
            <person name="Hall D.H."/>
            <person name="White J.G."/>
            <person name="LeBoeuf B."/>
            <person name="Garcia L.R."/>
            <person name="Alon U."/>
            <person name="Hobert O."/>
        </authorList>
    </citation>
    <scope>TISSUE SPECIFICITY</scope>
</reference>
<reference evidence="8" key="4">
    <citation type="journal article" date="2016" name="Elife">
        <title>Release-dependent feedback inhibition by a presynaptically localized ligand-gated anion channel.</title>
        <authorList>
            <person name="Takayanagi-Kiya S."/>
            <person name="Zhou K."/>
            <person name="Jin Y."/>
        </authorList>
    </citation>
    <scope>DISRUPTION PHENOTYPE</scope>
</reference>
<protein>
    <recommendedName>
        <fullName evidence="8">Acetylcholine-gated chloride channel subunit acc-1</fullName>
    </recommendedName>
</protein>
<keyword id="KW-1003">Cell membrane</keyword>
<keyword id="KW-0868">Chloride</keyword>
<keyword id="KW-0869">Chloride channel</keyword>
<keyword id="KW-1015">Disulfide bond</keyword>
<keyword id="KW-0325">Glycoprotein</keyword>
<keyword id="KW-0407">Ion channel</keyword>
<keyword id="KW-0406">Ion transport</keyword>
<keyword id="KW-1071">Ligand-gated ion channel</keyword>
<keyword id="KW-0472">Membrane</keyword>
<keyword id="KW-1185">Reference proteome</keyword>
<keyword id="KW-0732">Signal</keyword>
<keyword id="KW-0812">Transmembrane</keyword>
<keyword id="KW-1133">Transmembrane helix</keyword>
<keyword id="KW-0813">Transport</keyword>
<dbReference type="EMBL" id="BX284604">
    <property type="protein sequence ID" value="CAA92466.2"/>
    <property type="molecule type" value="Genomic_DNA"/>
</dbReference>
<dbReference type="PIR" id="T22947">
    <property type="entry name" value="T22947"/>
</dbReference>
<dbReference type="RefSeq" id="NP_501715.1">
    <property type="nucleotide sequence ID" value="NM_069314.8"/>
</dbReference>
<dbReference type="SMR" id="Q21005"/>
<dbReference type="FunCoup" id="Q21005">
    <property type="interactions" value="74"/>
</dbReference>
<dbReference type="STRING" id="6239.F58G6.4b.1"/>
<dbReference type="GlyCosmos" id="Q21005">
    <property type="glycosylation" value="4 sites, No reported glycans"/>
</dbReference>
<dbReference type="PaxDb" id="6239-F58G6.4"/>
<dbReference type="EnsemblMetazoa" id="F58G6.4a.1">
    <property type="protein sequence ID" value="F58G6.4a.1"/>
    <property type="gene ID" value="WBGene00010275"/>
</dbReference>
<dbReference type="EnsemblMetazoa" id="F58G6.4a.2">
    <property type="protein sequence ID" value="F58G6.4a.2"/>
    <property type="gene ID" value="WBGene00010275"/>
</dbReference>
<dbReference type="GeneID" id="177799"/>
<dbReference type="KEGG" id="cel:CELE_F58G6.4"/>
<dbReference type="UCSC" id="F58G6.4">
    <property type="organism name" value="c. elegans"/>
</dbReference>
<dbReference type="AGR" id="WB:WBGene00010275"/>
<dbReference type="CTD" id="177799"/>
<dbReference type="WormBase" id="F58G6.4a">
    <property type="protein sequence ID" value="CE28039"/>
    <property type="gene ID" value="WBGene00010275"/>
    <property type="gene designation" value="acc-1"/>
</dbReference>
<dbReference type="eggNOG" id="KOG3644">
    <property type="taxonomic scope" value="Eukaryota"/>
</dbReference>
<dbReference type="HOGENOM" id="CLU_010920_1_3_1"/>
<dbReference type="InParanoid" id="Q21005"/>
<dbReference type="OrthoDB" id="442503at2759"/>
<dbReference type="PhylomeDB" id="Q21005"/>
<dbReference type="Reactome" id="R-CEL-112314">
    <property type="pathway name" value="Neurotransmitter receptors and postsynaptic signal transmission"/>
</dbReference>
<dbReference type="PRO" id="PR:Q21005"/>
<dbReference type="Proteomes" id="UP000001940">
    <property type="component" value="Chromosome IV"/>
</dbReference>
<dbReference type="Bgee" id="WBGene00010275">
    <property type="expression patterns" value="Expressed in pharyngeal muscle cell (C elegans) and 3 other cell types or tissues"/>
</dbReference>
<dbReference type="ExpressionAtlas" id="Q21005">
    <property type="expression patterns" value="baseline and differential"/>
</dbReference>
<dbReference type="GO" id="GO:0034707">
    <property type="term" value="C:chloride channel complex"/>
    <property type="evidence" value="ECO:0007669"/>
    <property type="project" value="UniProtKB-KW"/>
</dbReference>
<dbReference type="GO" id="GO:0005886">
    <property type="term" value="C:plasma membrane"/>
    <property type="evidence" value="ECO:0007669"/>
    <property type="project" value="UniProtKB-SubCell"/>
</dbReference>
<dbReference type="GO" id="GO:0005254">
    <property type="term" value="F:chloride channel activity"/>
    <property type="evidence" value="ECO:0007669"/>
    <property type="project" value="UniProtKB-KW"/>
</dbReference>
<dbReference type="GO" id="GO:0005230">
    <property type="term" value="F:extracellular ligand-gated monoatomic ion channel activity"/>
    <property type="evidence" value="ECO:0007669"/>
    <property type="project" value="InterPro"/>
</dbReference>
<dbReference type="GO" id="GO:0004888">
    <property type="term" value="F:transmembrane signaling receptor activity"/>
    <property type="evidence" value="ECO:0007669"/>
    <property type="project" value="InterPro"/>
</dbReference>
<dbReference type="GO" id="GO:1902476">
    <property type="term" value="P:chloride transmembrane transport"/>
    <property type="evidence" value="ECO:0000318"/>
    <property type="project" value="GO_Central"/>
</dbReference>
<dbReference type="CDD" id="cd18990">
    <property type="entry name" value="LGIC_ECD_GABAAR"/>
    <property type="match status" value="1"/>
</dbReference>
<dbReference type="CDD" id="cd19049">
    <property type="entry name" value="LGIC_TM_anion"/>
    <property type="match status" value="1"/>
</dbReference>
<dbReference type="FunFam" id="2.70.170.10:FF:000069">
    <property type="entry name" value="Acetylcholine-gated chloride channel subunit acc-1"/>
    <property type="match status" value="1"/>
</dbReference>
<dbReference type="Gene3D" id="2.70.170.10">
    <property type="entry name" value="Neurotransmitter-gated ion-channel ligand-binding domain"/>
    <property type="match status" value="1"/>
</dbReference>
<dbReference type="Gene3D" id="1.20.58.390">
    <property type="entry name" value="Neurotransmitter-gated ion-channel transmembrane domain"/>
    <property type="match status" value="1"/>
</dbReference>
<dbReference type="InterPro" id="IPR006028">
    <property type="entry name" value="GABAA/Glycine_rcpt"/>
</dbReference>
<dbReference type="InterPro" id="IPR006202">
    <property type="entry name" value="Neur_chan_lig-bd"/>
</dbReference>
<dbReference type="InterPro" id="IPR036734">
    <property type="entry name" value="Neur_chan_lig-bd_sf"/>
</dbReference>
<dbReference type="InterPro" id="IPR006201">
    <property type="entry name" value="Neur_channel"/>
</dbReference>
<dbReference type="InterPro" id="IPR036719">
    <property type="entry name" value="Neuro-gated_channel_TM_sf"/>
</dbReference>
<dbReference type="InterPro" id="IPR038050">
    <property type="entry name" value="Neuro_actylchol_rec"/>
</dbReference>
<dbReference type="InterPro" id="IPR006029">
    <property type="entry name" value="Neurotrans-gated_channel_TM"/>
</dbReference>
<dbReference type="InterPro" id="IPR018000">
    <property type="entry name" value="Neurotransmitter_ion_chnl_CS"/>
</dbReference>
<dbReference type="PANTHER" id="PTHR18945">
    <property type="entry name" value="NEUROTRANSMITTER GATED ION CHANNEL"/>
    <property type="match status" value="1"/>
</dbReference>
<dbReference type="Pfam" id="PF02931">
    <property type="entry name" value="Neur_chan_LBD"/>
    <property type="match status" value="1"/>
</dbReference>
<dbReference type="Pfam" id="PF02932">
    <property type="entry name" value="Neur_chan_memb"/>
    <property type="match status" value="1"/>
</dbReference>
<dbReference type="PRINTS" id="PR00253">
    <property type="entry name" value="GABAARECEPTR"/>
</dbReference>
<dbReference type="PRINTS" id="PR00252">
    <property type="entry name" value="NRIONCHANNEL"/>
</dbReference>
<dbReference type="SUPFAM" id="SSF90112">
    <property type="entry name" value="Neurotransmitter-gated ion-channel transmembrane pore"/>
    <property type="match status" value="1"/>
</dbReference>
<dbReference type="SUPFAM" id="SSF63712">
    <property type="entry name" value="Nicotinic receptor ligand binding domain-like"/>
    <property type="match status" value="1"/>
</dbReference>
<dbReference type="PROSITE" id="PS00236">
    <property type="entry name" value="NEUROTR_ION_CHANNEL"/>
    <property type="match status" value="1"/>
</dbReference>
<accession>Q21005</accession>